<feature type="chain" id="PRO_0000382956" description="Probable 4-amino-4-deoxy-L-arabinose-phosphoundecaprenol flippase subunit ArnE">
    <location>
        <begin position="1"/>
        <end position="111"/>
    </location>
</feature>
<feature type="topological domain" description="Cytoplasmic" evidence="1">
    <location>
        <begin position="1"/>
        <end position="37"/>
    </location>
</feature>
<feature type="transmembrane region" description="Helical" evidence="2">
    <location>
        <begin position="38"/>
        <end position="58"/>
    </location>
</feature>
<feature type="topological domain" description="Periplasmic" evidence="1">
    <location>
        <begin position="59"/>
        <end position="60"/>
    </location>
</feature>
<feature type="transmembrane region" description="Helical" evidence="2">
    <location>
        <begin position="61"/>
        <end position="81"/>
    </location>
</feature>
<feature type="topological domain" description="Cytoplasmic" evidence="1">
    <location>
        <begin position="82"/>
        <end position="87"/>
    </location>
</feature>
<feature type="transmembrane region" description="Helical" evidence="2">
    <location>
        <begin position="88"/>
        <end position="108"/>
    </location>
</feature>
<feature type="topological domain" description="Periplasmic" evidence="1">
    <location>
        <begin position="109"/>
        <end position="111"/>
    </location>
</feature>
<feature type="domain" description="EamA" evidence="2">
    <location>
        <begin position="40"/>
        <end position="109"/>
    </location>
</feature>
<sequence length="111" mass="12164">MIWLTLVFASLLSVAGQLCQKQATCFVAINKRRKHIALWLGLALACLGLAMVLWLLVLQNVPVGIAYPMLSLNFVWVTLAAVKLWHEPVSPRHWCGVAFIIGGIVILGSTV</sequence>
<organism>
    <name type="scientific">Escherichia coli (strain 55989 / EAEC)</name>
    <dbReference type="NCBI Taxonomy" id="585055"/>
    <lineage>
        <taxon>Bacteria</taxon>
        <taxon>Pseudomonadati</taxon>
        <taxon>Pseudomonadota</taxon>
        <taxon>Gammaproteobacteria</taxon>
        <taxon>Enterobacterales</taxon>
        <taxon>Enterobacteriaceae</taxon>
        <taxon>Escherichia</taxon>
    </lineage>
</organism>
<comment type="function">
    <text evidence="2">Translocates 4-amino-4-deoxy-L-arabinose-phosphoundecaprenol (alpha-L-Ara4N-phosphoundecaprenol) from the cytoplasmic to the periplasmic side of the inner membrane.</text>
</comment>
<comment type="pathway">
    <text evidence="2">Bacterial outer membrane biogenesis; lipopolysaccharide biosynthesis.</text>
</comment>
<comment type="subunit">
    <text evidence="2">Heterodimer of ArnE and ArnF.</text>
</comment>
<comment type="subcellular location">
    <subcellularLocation>
        <location evidence="2">Cell inner membrane</location>
        <topology evidence="2">Multi-pass membrane protein</topology>
    </subcellularLocation>
</comment>
<comment type="similarity">
    <text evidence="2">Belongs to the ArnE family.</text>
</comment>
<name>ARNE_ECO55</name>
<accession>B7LAS3</accession>
<reference key="1">
    <citation type="journal article" date="2009" name="PLoS Genet.">
        <title>Organised genome dynamics in the Escherichia coli species results in highly diverse adaptive paths.</title>
        <authorList>
            <person name="Touchon M."/>
            <person name="Hoede C."/>
            <person name="Tenaillon O."/>
            <person name="Barbe V."/>
            <person name="Baeriswyl S."/>
            <person name="Bidet P."/>
            <person name="Bingen E."/>
            <person name="Bonacorsi S."/>
            <person name="Bouchier C."/>
            <person name="Bouvet O."/>
            <person name="Calteau A."/>
            <person name="Chiapello H."/>
            <person name="Clermont O."/>
            <person name="Cruveiller S."/>
            <person name="Danchin A."/>
            <person name="Diard M."/>
            <person name="Dossat C."/>
            <person name="Karoui M.E."/>
            <person name="Frapy E."/>
            <person name="Garry L."/>
            <person name="Ghigo J.M."/>
            <person name="Gilles A.M."/>
            <person name="Johnson J."/>
            <person name="Le Bouguenec C."/>
            <person name="Lescat M."/>
            <person name="Mangenot S."/>
            <person name="Martinez-Jehanne V."/>
            <person name="Matic I."/>
            <person name="Nassif X."/>
            <person name="Oztas S."/>
            <person name="Petit M.A."/>
            <person name="Pichon C."/>
            <person name="Rouy Z."/>
            <person name="Ruf C.S."/>
            <person name="Schneider D."/>
            <person name="Tourret J."/>
            <person name="Vacherie B."/>
            <person name="Vallenet D."/>
            <person name="Medigue C."/>
            <person name="Rocha E.P.C."/>
            <person name="Denamur E."/>
        </authorList>
    </citation>
    <scope>NUCLEOTIDE SEQUENCE [LARGE SCALE GENOMIC DNA]</scope>
    <source>
        <strain>55989 / EAEC</strain>
    </source>
</reference>
<protein>
    <recommendedName>
        <fullName evidence="2">Probable 4-amino-4-deoxy-L-arabinose-phosphoundecaprenol flippase subunit ArnE</fullName>
        <shortName evidence="2">L-Ara4N-phosphoundecaprenol flippase subunit ArnE</shortName>
    </recommendedName>
    <alternativeName>
        <fullName evidence="2">Undecaprenyl phosphate-aminoarabinose flippase subunit ArnE</fullName>
    </alternativeName>
</protein>
<gene>
    <name evidence="2" type="primary">arnE</name>
    <name type="ordered locus">EC55989_2505</name>
</gene>
<keyword id="KW-0997">Cell inner membrane</keyword>
<keyword id="KW-1003">Cell membrane</keyword>
<keyword id="KW-0441">Lipid A biosynthesis</keyword>
<keyword id="KW-0444">Lipid biosynthesis</keyword>
<keyword id="KW-0443">Lipid metabolism</keyword>
<keyword id="KW-0448">Lipopolysaccharide biosynthesis</keyword>
<keyword id="KW-0472">Membrane</keyword>
<keyword id="KW-1185">Reference proteome</keyword>
<keyword id="KW-0812">Transmembrane</keyword>
<keyword id="KW-1133">Transmembrane helix</keyword>
<keyword id="KW-0813">Transport</keyword>
<evidence type="ECO:0000255" key="1"/>
<evidence type="ECO:0000255" key="2">
    <source>
        <dbReference type="HAMAP-Rule" id="MF_01869"/>
    </source>
</evidence>
<dbReference type="EMBL" id="CU928145">
    <property type="protein sequence ID" value="CAU98373.1"/>
    <property type="molecule type" value="Genomic_DNA"/>
</dbReference>
<dbReference type="RefSeq" id="WP_000638021.1">
    <property type="nucleotide sequence ID" value="NC_011748.1"/>
</dbReference>
<dbReference type="SMR" id="B7LAS3"/>
<dbReference type="KEGG" id="eck:EC55989_2505"/>
<dbReference type="HOGENOM" id="CLU_131462_5_1_6"/>
<dbReference type="UniPathway" id="UPA00030"/>
<dbReference type="Proteomes" id="UP000000746">
    <property type="component" value="Chromosome"/>
</dbReference>
<dbReference type="GO" id="GO:0005886">
    <property type="term" value="C:plasma membrane"/>
    <property type="evidence" value="ECO:0007669"/>
    <property type="project" value="UniProtKB-SubCell"/>
</dbReference>
<dbReference type="GO" id="GO:1901505">
    <property type="term" value="F:carbohydrate derivative transmembrane transporter activity"/>
    <property type="evidence" value="ECO:0007669"/>
    <property type="project" value="InterPro"/>
</dbReference>
<dbReference type="GO" id="GO:0009245">
    <property type="term" value="P:lipid A biosynthetic process"/>
    <property type="evidence" value="ECO:0007669"/>
    <property type="project" value="UniProtKB-UniRule"/>
</dbReference>
<dbReference type="GO" id="GO:0009103">
    <property type="term" value="P:lipopolysaccharide biosynthetic process"/>
    <property type="evidence" value="ECO:0007669"/>
    <property type="project" value="UniProtKB-UniRule"/>
</dbReference>
<dbReference type="FunFam" id="1.10.3730.20:FF:000002">
    <property type="entry name" value="Probable 4-amino-4-deoxy-L-arabinose-phosphoundecaprenol flippase subunit ArnE"/>
    <property type="match status" value="1"/>
</dbReference>
<dbReference type="Gene3D" id="1.10.3730.20">
    <property type="match status" value="1"/>
</dbReference>
<dbReference type="HAMAP" id="MF_01869">
    <property type="entry name" value="Flippase_ArnE"/>
    <property type="match status" value="1"/>
</dbReference>
<dbReference type="InterPro" id="IPR000620">
    <property type="entry name" value="EamA_dom"/>
</dbReference>
<dbReference type="InterPro" id="IPR022883">
    <property type="entry name" value="Flippase_ArnE"/>
</dbReference>
<dbReference type="InterPro" id="IPR000390">
    <property type="entry name" value="Small_drug/metabolite_transptr"/>
</dbReference>
<dbReference type="NCBIfam" id="NF011625">
    <property type="entry name" value="PRK15051.1"/>
    <property type="match status" value="1"/>
</dbReference>
<dbReference type="PANTHER" id="PTHR30561:SF23">
    <property type="entry name" value="4-AMINO-4-DEOXY-L-ARABINOSE-PHOSPHOUNDECAPRENOL FLIPPASE SUBUNIT ARNE-RELATED"/>
    <property type="match status" value="1"/>
</dbReference>
<dbReference type="PANTHER" id="PTHR30561">
    <property type="entry name" value="SMR FAMILY PROTON-DEPENDENT DRUG EFFLUX TRANSPORTER SUGE"/>
    <property type="match status" value="1"/>
</dbReference>
<dbReference type="Pfam" id="PF00892">
    <property type="entry name" value="EamA"/>
    <property type="match status" value="1"/>
</dbReference>
<dbReference type="SUPFAM" id="SSF103481">
    <property type="entry name" value="Multidrug resistance efflux transporter EmrE"/>
    <property type="match status" value="1"/>
</dbReference>
<proteinExistence type="inferred from homology"/>